<proteinExistence type="inferred from homology"/>
<reference key="1">
    <citation type="journal article" date="2003" name="Mol. Microbiol.">
        <title>Genome-based analysis of virulence genes in a non-biofilm-forming Staphylococcus epidermidis strain (ATCC 12228).</title>
        <authorList>
            <person name="Zhang Y.-Q."/>
            <person name="Ren S.-X."/>
            <person name="Li H.-L."/>
            <person name="Wang Y.-X."/>
            <person name="Fu G."/>
            <person name="Yang J."/>
            <person name="Qin Z.-Q."/>
            <person name="Miao Y.-G."/>
            <person name="Wang W.-Y."/>
            <person name="Chen R.-S."/>
            <person name="Shen Y."/>
            <person name="Chen Z."/>
            <person name="Yuan Z.-H."/>
            <person name="Zhao G.-P."/>
            <person name="Qu D."/>
            <person name="Danchin A."/>
            <person name="Wen Y.-M."/>
        </authorList>
    </citation>
    <scope>NUCLEOTIDE SEQUENCE [LARGE SCALE GENOMIC DNA]</scope>
    <source>
        <strain>ATCC 12228 / FDA PCI 1200</strain>
    </source>
</reference>
<protein>
    <recommendedName>
        <fullName>UPF0213 protein SE_2295</fullName>
    </recommendedName>
</protein>
<dbReference type="EMBL" id="AE015929">
    <property type="protein sequence ID" value="AAO05937.1"/>
    <property type="molecule type" value="Genomic_DNA"/>
</dbReference>
<dbReference type="RefSeq" id="NP_765850.1">
    <property type="nucleotide sequence ID" value="NC_004461.1"/>
</dbReference>
<dbReference type="RefSeq" id="WP_001832208.1">
    <property type="nucleotide sequence ID" value="NZ_WBME01000023.1"/>
</dbReference>
<dbReference type="SMR" id="Q8CQU1"/>
<dbReference type="KEGG" id="sep:SE_2295"/>
<dbReference type="PATRIC" id="fig|176280.10.peg.2238"/>
<dbReference type="eggNOG" id="COG2827">
    <property type="taxonomic scope" value="Bacteria"/>
</dbReference>
<dbReference type="HOGENOM" id="CLU_135650_0_3_9"/>
<dbReference type="OrthoDB" id="9807770at2"/>
<dbReference type="Proteomes" id="UP000001411">
    <property type="component" value="Chromosome"/>
</dbReference>
<dbReference type="CDD" id="cd10456">
    <property type="entry name" value="GIY-YIG_UPF0213"/>
    <property type="match status" value="1"/>
</dbReference>
<dbReference type="Gene3D" id="3.40.1440.10">
    <property type="entry name" value="GIY-YIG endonuclease"/>
    <property type="match status" value="1"/>
</dbReference>
<dbReference type="InterPro" id="IPR000305">
    <property type="entry name" value="GIY-YIG_endonuc"/>
</dbReference>
<dbReference type="InterPro" id="IPR035901">
    <property type="entry name" value="GIY-YIG_endonuc_sf"/>
</dbReference>
<dbReference type="InterPro" id="IPR050190">
    <property type="entry name" value="UPF0213_domain"/>
</dbReference>
<dbReference type="PANTHER" id="PTHR34477">
    <property type="entry name" value="UPF0213 PROTEIN YHBQ"/>
    <property type="match status" value="1"/>
</dbReference>
<dbReference type="PANTHER" id="PTHR34477:SF1">
    <property type="entry name" value="UPF0213 PROTEIN YHBQ"/>
    <property type="match status" value="1"/>
</dbReference>
<dbReference type="Pfam" id="PF01541">
    <property type="entry name" value="GIY-YIG"/>
    <property type="match status" value="1"/>
</dbReference>
<dbReference type="SMART" id="SM00465">
    <property type="entry name" value="GIYc"/>
    <property type="match status" value="1"/>
</dbReference>
<dbReference type="SUPFAM" id="SSF82771">
    <property type="entry name" value="GIY-YIG endonuclease"/>
    <property type="match status" value="1"/>
</dbReference>
<dbReference type="PROSITE" id="PS50164">
    <property type="entry name" value="GIY_YIG"/>
    <property type="match status" value="1"/>
</dbReference>
<gene>
    <name type="ordered locus">SE_2295</name>
</gene>
<sequence length="82" mass="9680">MDKHFVYIVKCNDGSLYTGYAKDVNARVIKHNNGKGAKYTKIRRPVELVYQETYTTKSEALKREYEIKTYTRQQKLKMIQEG</sequence>
<organism>
    <name type="scientific">Staphylococcus epidermidis (strain ATCC 12228 / FDA PCI 1200)</name>
    <dbReference type="NCBI Taxonomy" id="176280"/>
    <lineage>
        <taxon>Bacteria</taxon>
        <taxon>Bacillati</taxon>
        <taxon>Bacillota</taxon>
        <taxon>Bacilli</taxon>
        <taxon>Bacillales</taxon>
        <taxon>Staphylococcaceae</taxon>
        <taxon>Staphylococcus</taxon>
    </lineage>
</organism>
<evidence type="ECO:0000255" key="1">
    <source>
        <dbReference type="PROSITE-ProRule" id="PRU00977"/>
    </source>
</evidence>
<evidence type="ECO:0000305" key="2"/>
<comment type="similarity">
    <text evidence="2">Belongs to the UPF0213 family.</text>
</comment>
<feature type="chain" id="PRO_0000161386" description="UPF0213 protein SE_2295">
    <location>
        <begin position="1"/>
        <end position="82"/>
    </location>
</feature>
<feature type="domain" description="GIY-YIG" evidence="1">
    <location>
        <begin position="2"/>
        <end position="77"/>
    </location>
</feature>
<accession>Q8CQU1</accession>
<name>Y2295_STAES</name>